<keyword id="KW-0378">Hydrolase</keyword>
<keyword id="KW-0662">Pyridine nucleotide biosynthesis</keyword>
<keyword id="KW-0663">Pyridoxal phosphate</keyword>
<keyword id="KW-1185">Reference proteome</keyword>
<dbReference type="EC" id="3.7.1.3" evidence="1"/>
<dbReference type="EMBL" id="AE016877">
    <property type="protein sequence ID" value="AAP09712.1"/>
    <property type="molecule type" value="Genomic_DNA"/>
</dbReference>
<dbReference type="RefSeq" id="NP_832511.1">
    <property type="nucleotide sequence ID" value="NC_004722.1"/>
</dbReference>
<dbReference type="RefSeq" id="WP_000276298.1">
    <property type="nucleotide sequence ID" value="NZ_CP138336.1"/>
</dbReference>
<dbReference type="SMR" id="Q81CK0"/>
<dbReference type="STRING" id="226900.BC_2759"/>
<dbReference type="KEGG" id="bce:BC2759"/>
<dbReference type="PATRIC" id="fig|226900.8.peg.2814"/>
<dbReference type="HOGENOM" id="CLU_003433_4_0_9"/>
<dbReference type="OrthoDB" id="9812626at2"/>
<dbReference type="UniPathway" id="UPA00253">
    <property type="reaction ID" value="UER00329"/>
</dbReference>
<dbReference type="UniPathway" id="UPA00334">
    <property type="reaction ID" value="UER00455"/>
</dbReference>
<dbReference type="Proteomes" id="UP000001417">
    <property type="component" value="Chromosome"/>
</dbReference>
<dbReference type="GO" id="GO:0005737">
    <property type="term" value="C:cytoplasm"/>
    <property type="evidence" value="ECO:0000318"/>
    <property type="project" value="GO_Central"/>
</dbReference>
<dbReference type="GO" id="GO:0030429">
    <property type="term" value="F:kynureninase activity"/>
    <property type="evidence" value="ECO:0000318"/>
    <property type="project" value="GO_Central"/>
</dbReference>
<dbReference type="GO" id="GO:0030170">
    <property type="term" value="F:pyridoxal phosphate binding"/>
    <property type="evidence" value="ECO:0007669"/>
    <property type="project" value="UniProtKB-UniRule"/>
</dbReference>
<dbReference type="GO" id="GO:0043420">
    <property type="term" value="P:anthranilate metabolic process"/>
    <property type="evidence" value="ECO:0000318"/>
    <property type="project" value="GO_Central"/>
</dbReference>
<dbReference type="GO" id="GO:0097053">
    <property type="term" value="P:L-kynurenine catabolic process"/>
    <property type="evidence" value="ECO:0007669"/>
    <property type="project" value="UniProtKB-UniRule"/>
</dbReference>
<dbReference type="GO" id="GO:0019441">
    <property type="term" value="P:L-tryptophan catabolic process to kynurenine"/>
    <property type="evidence" value="ECO:0000318"/>
    <property type="project" value="GO_Central"/>
</dbReference>
<dbReference type="GO" id="GO:0009435">
    <property type="term" value="P:NAD biosynthetic process"/>
    <property type="evidence" value="ECO:0007669"/>
    <property type="project" value="UniProtKB-UniPathway"/>
</dbReference>
<dbReference type="GO" id="GO:0019805">
    <property type="term" value="P:quinolinate biosynthetic process"/>
    <property type="evidence" value="ECO:0007669"/>
    <property type="project" value="UniProtKB-UniRule"/>
</dbReference>
<dbReference type="FunFam" id="3.40.640.10:FF:000031">
    <property type="entry name" value="Kynureninase"/>
    <property type="match status" value="1"/>
</dbReference>
<dbReference type="Gene3D" id="3.90.1150.10">
    <property type="entry name" value="Aspartate Aminotransferase, domain 1"/>
    <property type="match status" value="1"/>
</dbReference>
<dbReference type="Gene3D" id="3.40.640.10">
    <property type="entry name" value="Type I PLP-dependent aspartate aminotransferase-like (Major domain)"/>
    <property type="match status" value="1"/>
</dbReference>
<dbReference type="HAMAP" id="MF_01970">
    <property type="entry name" value="Kynureninase"/>
    <property type="match status" value="1"/>
</dbReference>
<dbReference type="InterPro" id="IPR010111">
    <property type="entry name" value="Kynureninase"/>
</dbReference>
<dbReference type="InterPro" id="IPR015424">
    <property type="entry name" value="PyrdxlP-dep_Trfase"/>
</dbReference>
<dbReference type="InterPro" id="IPR015421">
    <property type="entry name" value="PyrdxlP-dep_Trfase_major"/>
</dbReference>
<dbReference type="InterPro" id="IPR015422">
    <property type="entry name" value="PyrdxlP-dep_Trfase_small"/>
</dbReference>
<dbReference type="NCBIfam" id="TIGR01814">
    <property type="entry name" value="kynureninase"/>
    <property type="match status" value="1"/>
</dbReference>
<dbReference type="PANTHER" id="PTHR14084">
    <property type="entry name" value="KYNURENINASE"/>
    <property type="match status" value="1"/>
</dbReference>
<dbReference type="PANTHER" id="PTHR14084:SF0">
    <property type="entry name" value="KYNURENINASE"/>
    <property type="match status" value="1"/>
</dbReference>
<dbReference type="Pfam" id="PF22580">
    <property type="entry name" value="KYNU_C"/>
    <property type="match status" value="1"/>
</dbReference>
<dbReference type="PIRSF" id="PIRSF038800">
    <property type="entry name" value="KYNU"/>
    <property type="match status" value="1"/>
</dbReference>
<dbReference type="SUPFAM" id="SSF53383">
    <property type="entry name" value="PLP-dependent transferases"/>
    <property type="match status" value="1"/>
</dbReference>
<comment type="function">
    <text evidence="1">Catalyzes the cleavage of L-kynurenine (L-Kyn) and L-3-hydroxykynurenine (L-3OHKyn) into anthranilic acid (AA) and 3-hydroxyanthranilic acid (3-OHAA), respectively.</text>
</comment>
<comment type="catalytic activity">
    <reaction evidence="1">
        <text>L-kynurenine + H2O = anthranilate + L-alanine + H(+)</text>
        <dbReference type="Rhea" id="RHEA:16813"/>
        <dbReference type="ChEBI" id="CHEBI:15377"/>
        <dbReference type="ChEBI" id="CHEBI:15378"/>
        <dbReference type="ChEBI" id="CHEBI:16567"/>
        <dbReference type="ChEBI" id="CHEBI:57959"/>
        <dbReference type="ChEBI" id="CHEBI:57972"/>
        <dbReference type="EC" id="3.7.1.3"/>
    </reaction>
</comment>
<comment type="catalytic activity">
    <reaction evidence="1">
        <text>3-hydroxy-L-kynurenine + H2O = 3-hydroxyanthranilate + L-alanine + H(+)</text>
        <dbReference type="Rhea" id="RHEA:25143"/>
        <dbReference type="ChEBI" id="CHEBI:15377"/>
        <dbReference type="ChEBI" id="CHEBI:15378"/>
        <dbReference type="ChEBI" id="CHEBI:36559"/>
        <dbReference type="ChEBI" id="CHEBI:57972"/>
        <dbReference type="ChEBI" id="CHEBI:58125"/>
        <dbReference type="EC" id="3.7.1.3"/>
    </reaction>
</comment>
<comment type="cofactor">
    <cofactor evidence="1">
        <name>pyridoxal 5'-phosphate</name>
        <dbReference type="ChEBI" id="CHEBI:597326"/>
    </cofactor>
</comment>
<comment type="pathway">
    <text evidence="1">Amino-acid degradation; L-kynurenine degradation; L-alanine and anthranilate from L-kynurenine: step 1/1.</text>
</comment>
<comment type="pathway">
    <text evidence="1">Cofactor biosynthesis; NAD(+) biosynthesis; quinolinate from L-kynurenine: step 2/3.</text>
</comment>
<comment type="subunit">
    <text evidence="1">Homodimer.</text>
</comment>
<comment type="similarity">
    <text evidence="1">Belongs to the kynureninase family.</text>
</comment>
<sequence length="428" mass="48754">MYKEPFQPTYEYALECDKHDELKDFQTEFYKKEGTIYLDGNSLGLLSKRAEKSLLTLLDSWKEYGIDGWTEGEHPWFFLSEKLGKLTAPLIGALPEETIVTGSTTTNIHQVIATFYEPKGIRTKILADELTFPSDIYALQSQIRLKGLDPEEHLVRVKSRDGRTLSEEDIIHAMEDDIALILLPSVLYRSGQILDMKRLTTEAHKRGIHIGFDLCHSIGSIPHHFKDWDVDFAVWCNYKYLNAGPGSVAGLYVNSKHFNRLPGLSGWFSSRKDKQFDMEHTLTAADHAGAYQIGTPHVLSTAPLIGSLEIFKDAGIERLREKSLHITRYMLNLIGHELKDFEFTIGNPLEDEKRGGHIYLEHAEAARICKALKANGVIPDFRAPNGVRLAPVALYNTYEEVWKSVQILKKIMKNEEYKQFENKREVVA</sequence>
<reference key="1">
    <citation type="journal article" date="2003" name="Nature">
        <title>Genome sequence of Bacillus cereus and comparative analysis with Bacillus anthracis.</title>
        <authorList>
            <person name="Ivanova N."/>
            <person name="Sorokin A."/>
            <person name="Anderson I."/>
            <person name="Galleron N."/>
            <person name="Candelon B."/>
            <person name="Kapatral V."/>
            <person name="Bhattacharyya A."/>
            <person name="Reznik G."/>
            <person name="Mikhailova N."/>
            <person name="Lapidus A."/>
            <person name="Chu L."/>
            <person name="Mazur M."/>
            <person name="Goltsman E."/>
            <person name="Larsen N."/>
            <person name="D'Souza M."/>
            <person name="Walunas T."/>
            <person name="Grechkin Y."/>
            <person name="Pusch G."/>
            <person name="Haselkorn R."/>
            <person name="Fonstein M."/>
            <person name="Ehrlich S.D."/>
            <person name="Overbeek R."/>
            <person name="Kyrpides N.C."/>
        </authorList>
    </citation>
    <scope>NUCLEOTIDE SEQUENCE [LARGE SCALE GENOMIC DNA]</scope>
    <source>
        <strain>ATCC 14579 / DSM 31 / CCUG 7414 / JCM 2152 / NBRC 15305 / NCIMB 9373 / NCTC 2599 / NRRL B-3711</strain>
    </source>
</reference>
<gene>
    <name evidence="1" type="primary">kynU</name>
    <name type="ordered locus">BC_2759</name>
</gene>
<feature type="chain" id="PRO_0000356990" description="Kynureninase">
    <location>
        <begin position="1"/>
        <end position="428"/>
    </location>
</feature>
<feature type="binding site" evidence="1">
    <location>
        <position position="104"/>
    </location>
    <ligand>
        <name>pyridoxal 5'-phosphate</name>
        <dbReference type="ChEBI" id="CHEBI:597326"/>
    </ligand>
</feature>
<feature type="binding site" evidence="1">
    <location>
        <position position="105"/>
    </location>
    <ligand>
        <name>pyridoxal 5'-phosphate</name>
        <dbReference type="ChEBI" id="CHEBI:597326"/>
    </ligand>
</feature>
<feature type="binding site" evidence="1">
    <location>
        <begin position="132"/>
        <end position="135"/>
    </location>
    <ligand>
        <name>pyridoxal 5'-phosphate</name>
        <dbReference type="ChEBI" id="CHEBI:597326"/>
    </ligand>
</feature>
<feature type="binding site" evidence="1">
    <location>
        <position position="213"/>
    </location>
    <ligand>
        <name>pyridoxal 5'-phosphate</name>
        <dbReference type="ChEBI" id="CHEBI:597326"/>
    </ligand>
</feature>
<feature type="binding site" evidence="1">
    <location>
        <position position="216"/>
    </location>
    <ligand>
        <name>pyridoxal 5'-phosphate</name>
        <dbReference type="ChEBI" id="CHEBI:597326"/>
    </ligand>
</feature>
<feature type="binding site" evidence="1">
    <location>
        <position position="238"/>
    </location>
    <ligand>
        <name>pyridoxal 5'-phosphate</name>
        <dbReference type="ChEBI" id="CHEBI:597326"/>
    </ligand>
</feature>
<feature type="binding site" evidence="1">
    <location>
        <position position="267"/>
    </location>
    <ligand>
        <name>pyridoxal 5'-phosphate</name>
        <dbReference type="ChEBI" id="CHEBI:597326"/>
    </ligand>
</feature>
<feature type="binding site" evidence="1">
    <location>
        <position position="295"/>
    </location>
    <ligand>
        <name>pyridoxal 5'-phosphate</name>
        <dbReference type="ChEBI" id="CHEBI:597326"/>
    </ligand>
</feature>
<feature type="modified residue" description="N6-(pyridoxal phosphate)lysine" evidence="1">
    <location>
        <position position="239"/>
    </location>
</feature>
<name>KYNU_BACCR</name>
<proteinExistence type="inferred from homology"/>
<organism>
    <name type="scientific">Bacillus cereus (strain ATCC 14579 / DSM 31 / CCUG 7414 / JCM 2152 / NBRC 15305 / NCIMB 9373 / NCTC 2599 / NRRL B-3711)</name>
    <dbReference type="NCBI Taxonomy" id="226900"/>
    <lineage>
        <taxon>Bacteria</taxon>
        <taxon>Bacillati</taxon>
        <taxon>Bacillota</taxon>
        <taxon>Bacilli</taxon>
        <taxon>Bacillales</taxon>
        <taxon>Bacillaceae</taxon>
        <taxon>Bacillus</taxon>
        <taxon>Bacillus cereus group</taxon>
    </lineage>
</organism>
<accession>Q81CK0</accession>
<protein>
    <recommendedName>
        <fullName evidence="1">Kynureninase</fullName>
        <ecNumber evidence="1">3.7.1.3</ecNumber>
    </recommendedName>
    <alternativeName>
        <fullName evidence="1">L-kynurenine hydrolase</fullName>
    </alternativeName>
</protein>
<evidence type="ECO:0000255" key="1">
    <source>
        <dbReference type="HAMAP-Rule" id="MF_01970"/>
    </source>
</evidence>